<sequence length="352" mass="41315">MENIMLQEIELKLAISPQIGIELPQYLAKFTILEHQNLFLGNTYYDYPDHFLAKQKMGLRIRQEDQELTLTLKTNGKVVSGLHSRPEYNLPLIEKETPTNAQLRGLYPFEQLPSSTLQPIFSTDFNRTFWLVEFQQSKIEVAFDQGKIIAGEYEQPISEIEFELKSGNVQDLFDFVETLPFERDIYFSSASKAKRGYLLGSKQFLTDWLNKWRDFLKEEREESAVDFCAKFNAVLKMEQKLLEETLSFSPTLFSQDFMKTVERVGAFFNLYHYYDENGKILEAMATEKQKETRLPALLESNQKIFVEIRDLIRFHSETKDNEKTIEKLTALLKSRVYFERMIKLMELSYDLG</sequence>
<accession>P45267</accession>
<reference key="1">
    <citation type="journal article" date="1995" name="Science">
        <title>Whole-genome random sequencing and assembly of Haemophilus influenzae Rd.</title>
        <authorList>
            <person name="Fleischmann R.D."/>
            <person name="Adams M.D."/>
            <person name="White O."/>
            <person name="Clayton R.A."/>
            <person name="Kirkness E.F."/>
            <person name="Kerlavage A.R."/>
            <person name="Bult C.J."/>
            <person name="Tomb J.-F."/>
            <person name="Dougherty B.A."/>
            <person name="Merrick J.M."/>
            <person name="McKenney K."/>
            <person name="Sutton G.G."/>
            <person name="FitzHugh W."/>
            <person name="Fields C.A."/>
            <person name="Gocayne J.D."/>
            <person name="Scott J.D."/>
            <person name="Shirley R."/>
            <person name="Liu L.-I."/>
            <person name="Glodek A."/>
            <person name="Kelley J.M."/>
            <person name="Weidman J.F."/>
            <person name="Phillips C.A."/>
            <person name="Spriggs T."/>
            <person name="Hedblom E."/>
            <person name="Cotton M.D."/>
            <person name="Utterback T.R."/>
            <person name="Hanna M.C."/>
            <person name="Nguyen D.T."/>
            <person name="Saudek D.M."/>
            <person name="Brandon R.C."/>
            <person name="Fine L.D."/>
            <person name="Fritchman J.L."/>
            <person name="Fuhrmann J.L."/>
            <person name="Geoghagen N.S.M."/>
            <person name="Gnehm C.L."/>
            <person name="McDonald L.A."/>
            <person name="Small K.V."/>
            <person name="Fraser C.M."/>
            <person name="Smith H.O."/>
            <person name="Venter J.C."/>
        </authorList>
    </citation>
    <scope>NUCLEOTIDE SEQUENCE [LARGE SCALE GENOMIC DNA]</scope>
    <source>
        <strain>ATCC 51907 / DSM 11121 / KW20 / Rd</strain>
    </source>
</reference>
<gene>
    <name type="ordered locus">HI_1598</name>
</gene>
<name>3PASE_HAEIN</name>
<protein>
    <recommendedName>
        <fullName>Inorganic triphosphatase</fullName>
        <shortName>PPPase</shortName>
        <ecNumber>3.6.1.25</ecNumber>
    </recommendedName>
</protein>
<proteinExistence type="inferred from homology"/>
<dbReference type="EC" id="3.6.1.25"/>
<dbReference type="EMBL" id="L42023">
    <property type="protein sequence ID" value="AAC23243.1"/>
    <property type="molecule type" value="Genomic_DNA"/>
</dbReference>
<dbReference type="PIR" id="H64172">
    <property type="entry name" value="H64172"/>
</dbReference>
<dbReference type="RefSeq" id="NP_439740.1">
    <property type="nucleotide sequence ID" value="NC_000907.1"/>
</dbReference>
<dbReference type="SMR" id="P45267"/>
<dbReference type="STRING" id="71421.HI_1598"/>
<dbReference type="DNASU" id="950454"/>
<dbReference type="EnsemblBacteria" id="AAC23243">
    <property type="protein sequence ID" value="AAC23243"/>
    <property type="gene ID" value="HI_1598"/>
</dbReference>
<dbReference type="KEGG" id="hin:HI_1598"/>
<dbReference type="PATRIC" id="fig|71421.8.peg.1671"/>
<dbReference type="eggNOG" id="COG3025">
    <property type="taxonomic scope" value="Bacteria"/>
</dbReference>
<dbReference type="HOGENOM" id="CLU_040400_0_0_6"/>
<dbReference type="OrthoDB" id="3034217at2"/>
<dbReference type="PhylomeDB" id="P45267"/>
<dbReference type="BioCyc" id="HINF71421:G1GJ1-1611-MONOMER"/>
<dbReference type="Proteomes" id="UP000000579">
    <property type="component" value="Chromosome"/>
</dbReference>
<dbReference type="GO" id="GO:0050355">
    <property type="term" value="F:inorganic triphosphate phosphatase activity"/>
    <property type="evidence" value="ECO:0000250"/>
    <property type="project" value="UniProtKB"/>
</dbReference>
<dbReference type="CDD" id="cd07756">
    <property type="entry name" value="CYTH-like_Pase_CHAD"/>
    <property type="match status" value="1"/>
</dbReference>
<dbReference type="Gene3D" id="2.40.320.10">
    <property type="entry name" value="Hypothetical Protein Pfu-838710-001"/>
    <property type="match status" value="1"/>
</dbReference>
<dbReference type="InterPro" id="IPR033469">
    <property type="entry name" value="CYTH-like_dom_sf"/>
</dbReference>
<dbReference type="InterPro" id="IPR023577">
    <property type="entry name" value="CYTH_domain"/>
</dbReference>
<dbReference type="InterPro" id="IPR039013">
    <property type="entry name" value="YgiF"/>
</dbReference>
<dbReference type="PANTHER" id="PTHR39569">
    <property type="entry name" value="INORGANIC TRIPHOSPHATASE"/>
    <property type="match status" value="1"/>
</dbReference>
<dbReference type="PANTHER" id="PTHR39569:SF1">
    <property type="entry name" value="INORGANIC TRIPHOSPHATASE"/>
    <property type="match status" value="1"/>
</dbReference>
<dbReference type="Pfam" id="PF01928">
    <property type="entry name" value="CYTH"/>
    <property type="match status" value="1"/>
</dbReference>
<dbReference type="SMART" id="SM01118">
    <property type="entry name" value="CYTH"/>
    <property type="match status" value="1"/>
</dbReference>
<dbReference type="SUPFAM" id="SSF55154">
    <property type="entry name" value="CYTH-like phosphatases"/>
    <property type="match status" value="1"/>
</dbReference>
<dbReference type="PROSITE" id="PS51707">
    <property type="entry name" value="CYTH"/>
    <property type="match status" value="1"/>
</dbReference>
<keyword id="KW-0378">Hydrolase</keyword>
<keyword id="KW-1185">Reference proteome</keyword>
<evidence type="ECO:0000250" key="1"/>
<evidence type="ECO:0000255" key="2">
    <source>
        <dbReference type="PROSITE-ProRule" id="PRU01044"/>
    </source>
</evidence>
<organism>
    <name type="scientific">Haemophilus influenzae (strain ATCC 51907 / DSM 11121 / KW20 / Rd)</name>
    <dbReference type="NCBI Taxonomy" id="71421"/>
    <lineage>
        <taxon>Bacteria</taxon>
        <taxon>Pseudomonadati</taxon>
        <taxon>Pseudomonadota</taxon>
        <taxon>Gammaproteobacteria</taxon>
        <taxon>Pasteurellales</taxon>
        <taxon>Pasteurellaceae</taxon>
        <taxon>Haemophilus</taxon>
    </lineage>
</organism>
<feature type="chain" id="PRO_0000169407" description="Inorganic triphosphatase">
    <location>
        <begin position="1"/>
        <end position="352"/>
    </location>
</feature>
<feature type="domain" description="CYTH" evidence="2">
    <location>
        <begin position="6"/>
        <end position="203"/>
    </location>
</feature>
<comment type="function">
    <text evidence="1">Involved in the hydrolysis of the beta-gamma-phosphoanhydride linkage of triphosphate-containing substrates (inorganic or nucleoside-linked). Catalyzes the hydrolysis of inorganic triphosphate (PPPi), which could be cytotoxic because of its high affinity for calcium ion, thereby interfering with calcium signaling (By similarity).</text>
</comment>
<comment type="catalytic activity">
    <reaction>
        <text>triphosphate + H2O = phosphate + diphosphate</text>
        <dbReference type="Rhea" id="RHEA:14157"/>
        <dbReference type="ChEBI" id="CHEBI:15377"/>
        <dbReference type="ChEBI" id="CHEBI:18036"/>
        <dbReference type="ChEBI" id="CHEBI:33019"/>
        <dbReference type="ChEBI" id="CHEBI:43474"/>
        <dbReference type="EC" id="3.6.1.25"/>
    </reaction>
</comment>